<sequence>MNNARLYQILRGPVFSEKSQMLGDSLGVQVFKIDSKATKLEVKKAVEMMFEGVEVLKVNTLNVKGKTKRFGKSIGRRNDYKKAYVTLKAGQDVQMADAGEEVANTTASTSETANNE</sequence>
<evidence type="ECO:0000255" key="1">
    <source>
        <dbReference type="HAMAP-Rule" id="MF_01369"/>
    </source>
</evidence>
<evidence type="ECO:0000305" key="2"/>
<accession>Q1QDI4</accession>
<organism>
    <name type="scientific">Psychrobacter cryohalolentis (strain ATCC BAA-1226 / DSM 17306 / VKM B-2378 / K5)</name>
    <dbReference type="NCBI Taxonomy" id="335284"/>
    <lineage>
        <taxon>Bacteria</taxon>
        <taxon>Pseudomonadati</taxon>
        <taxon>Pseudomonadota</taxon>
        <taxon>Gammaproteobacteria</taxon>
        <taxon>Moraxellales</taxon>
        <taxon>Moraxellaceae</taxon>
        <taxon>Psychrobacter</taxon>
    </lineage>
</organism>
<reference key="1">
    <citation type="submission" date="2006-03" db="EMBL/GenBank/DDBJ databases">
        <title>Complete sequence of chromosome of Psychrobacter cryohalolentis K5.</title>
        <authorList>
            <consortium name="US DOE Joint Genome Institute"/>
            <person name="Copeland A."/>
            <person name="Lucas S."/>
            <person name="Lapidus A."/>
            <person name="Barry K."/>
            <person name="Detter J.C."/>
            <person name="Glavina T."/>
            <person name="Hammon N."/>
            <person name="Israni S."/>
            <person name="Dalin E."/>
            <person name="Tice H."/>
            <person name="Pitluck S."/>
            <person name="Brettin T."/>
            <person name="Bruce D."/>
            <person name="Han C."/>
            <person name="Tapia R."/>
            <person name="Sims D.R."/>
            <person name="Gilna P."/>
            <person name="Schmutz J."/>
            <person name="Larimer F."/>
            <person name="Land M."/>
            <person name="Hauser L."/>
            <person name="Kyrpides N."/>
            <person name="Kim E."/>
            <person name="Richardson P."/>
        </authorList>
    </citation>
    <scope>NUCLEOTIDE SEQUENCE [LARGE SCALE GENOMIC DNA]</scope>
    <source>
        <strain>ATCC BAA-1226 / DSM 17306 / VKM B-2378 / K5</strain>
    </source>
</reference>
<proteinExistence type="inferred from homology"/>
<protein>
    <recommendedName>
        <fullName evidence="1">Large ribosomal subunit protein uL23</fullName>
    </recommendedName>
    <alternativeName>
        <fullName evidence="2">50S ribosomal protein L23</fullName>
    </alternativeName>
</protein>
<feature type="chain" id="PRO_0000272812" description="Large ribosomal subunit protein uL23">
    <location>
        <begin position="1"/>
        <end position="116"/>
    </location>
</feature>
<comment type="function">
    <text evidence="1">One of the early assembly proteins it binds 23S rRNA. One of the proteins that surrounds the polypeptide exit tunnel on the outside of the ribosome. Forms the main docking site for trigger factor binding to the ribosome.</text>
</comment>
<comment type="subunit">
    <text evidence="1">Part of the 50S ribosomal subunit. Contacts protein L29, and trigger factor when it is bound to the ribosome.</text>
</comment>
<comment type="similarity">
    <text evidence="1">Belongs to the universal ribosomal protein uL23 family.</text>
</comment>
<gene>
    <name evidence="1" type="primary">rplW</name>
    <name type="ordered locus">Pcryo_0486</name>
</gene>
<keyword id="KW-0687">Ribonucleoprotein</keyword>
<keyword id="KW-0689">Ribosomal protein</keyword>
<keyword id="KW-0694">RNA-binding</keyword>
<keyword id="KW-0699">rRNA-binding</keyword>
<name>RL23_PSYCK</name>
<dbReference type="EMBL" id="CP000323">
    <property type="protein sequence ID" value="ABE74269.1"/>
    <property type="molecule type" value="Genomic_DNA"/>
</dbReference>
<dbReference type="RefSeq" id="WP_011279789.1">
    <property type="nucleotide sequence ID" value="NC_007969.1"/>
</dbReference>
<dbReference type="SMR" id="Q1QDI4"/>
<dbReference type="STRING" id="335284.Pcryo_0486"/>
<dbReference type="KEGG" id="pcr:Pcryo_0486"/>
<dbReference type="eggNOG" id="COG0089">
    <property type="taxonomic scope" value="Bacteria"/>
</dbReference>
<dbReference type="HOGENOM" id="CLU_037562_3_1_6"/>
<dbReference type="Proteomes" id="UP000002425">
    <property type="component" value="Chromosome"/>
</dbReference>
<dbReference type="GO" id="GO:1990904">
    <property type="term" value="C:ribonucleoprotein complex"/>
    <property type="evidence" value="ECO:0007669"/>
    <property type="project" value="UniProtKB-KW"/>
</dbReference>
<dbReference type="GO" id="GO:0005840">
    <property type="term" value="C:ribosome"/>
    <property type="evidence" value="ECO:0007669"/>
    <property type="project" value="UniProtKB-KW"/>
</dbReference>
<dbReference type="GO" id="GO:0019843">
    <property type="term" value="F:rRNA binding"/>
    <property type="evidence" value="ECO:0007669"/>
    <property type="project" value="UniProtKB-UniRule"/>
</dbReference>
<dbReference type="GO" id="GO:0003735">
    <property type="term" value="F:structural constituent of ribosome"/>
    <property type="evidence" value="ECO:0007669"/>
    <property type="project" value="InterPro"/>
</dbReference>
<dbReference type="GO" id="GO:0006412">
    <property type="term" value="P:translation"/>
    <property type="evidence" value="ECO:0007669"/>
    <property type="project" value="UniProtKB-UniRule"/>
</dbReference>
<dbReference type="FunFam" id="3.30.70.330:FF:000001">
    <property type="entry name" value="50S ribosomal protein L23"/>
    <property type="match status" value="1"/>
</dbReference>
<dbReference type="Gene3D" id="3.30.70.330">
    <property type="match status" value="1"/>
</dbReference>
<dbReference type="HAMAP" id="MF_01369_B">
    <property type="entry name" value="Ribosomal_uL23_B"/>
    <property type="match status" value="1"/>
</dbReference>
<dbReference type="InterPro" id="IPR012677">
    <property type="entry name" value="Nucleotide-bd_a/b_plait_sf"/>
</dbReference>
<dbReference type="InterPro" id="IPR013025">
    <property type="entry name" value="Ribosomal_uL23-like"/>
</dbReference>
<dbReference type="InterPro" id="IPR012678">
    <property type="entry name" value="Ribosomal_uL23/eL15/eS24_sf"/>
</dbReference>
<dbReference type="NCBIfam" id="NF004359">
    <property type="entry name" value="PRK05738.1-3"/>
    <property type="match status" value="1"/>
</dbReference>
<dbReference type="NCBIfam" id="NF004363">
    <property type="entry name" value="PRK05738.2-4"/>
    <property type="match status" value="1"/>
</dbReference>
<dbReference type="PANTHER" id="PTHR11620">
    <property type="entry name" value="60S RIBOSOMAL PROTEIN L23A"/>
    <property type="match status" value="1"/>
</dbReference>
<dbReference type="Pfam" id="PF00276">
    <property type="entry name" value="Ribosomal_L23"/>
    <property type="match status" value="1"/>
</dbReference>
<dbReference type="SUPFAM" id="SSF54189">
    <property type="entry name" value="Ribosomal proteins S24e, L23 and L15e"/>
    <property type="match status" value="1"/>
</dbReference>